<proteinExistence type="inferred from homology"/>
<dbReference type="EMBL" id="FM242711">
    <property type="protein sequence ID" value="CAS06521.1"/>
    <property type="molecule type" value="Genomic_DNA"/>
</dbReference>
<dbReference type="RefSeq" id="WP_003725339.1">
    <property type="nucleotide sequence ID" value="NC_012488.1"/>
</dbReference>
<dbReference type="SMR" id="C1L0C8"/>
<dbReference type="KEGG" id="lmc:Lm4b_02767"/>
<dbReference type="HOGENOM" id="CLU_023853_0_1_9"/>
<dbReference type="GO" id="GO:0005694">
    <property type="term" value="C:chromosome"/>
    <property type="evidence" value="ECO:0007669"/>
    <property type="project" value="TreeGrafter"/>
</dbReference>
<dbReference type="GO" id="GO:0005737">
    <property type="term" value="C:cytoplasm"/>
    <property type="evidence" value="ECO:0007669"/>
    <property type="project" value="UniProtKB-UniRule"/>
</dbReference>
<dbReference type="GO" id="GO:0009295">
    <property type="term" value="C:nucleoid"/>
    <property type="evidence" value="ECO:0007669"/>
    <property type="project" value="UniProtKB-SubCell"/>
</dbReference>
<dbReference type="GO" id="GO:0003677">
    <property type="term" value="F:DNA binding"/>
    <property type="evidence" value="ECO:0007669"/>
    <property type="project" value="UniProtKB-UniRule"/>
</dbReference>
<dbReference type="GO" id="GO:0007059">
    <property type="term" value="P:chromosome segregation"/>
    <property type="evidence" value="ECO:0007669"/>
    <property type="project" value="TreeGrafter"/>
</dbReference>
<dbReference type="GO" id="GO:0000917">
    <property type="term" value="P:division septum assembly"/>
    <property type="evidence" value="ECO:0007669"/>
    <property type="project" value="UniProtKB-KW"/>
</dbReference>
<dbReference type="GO" id="GO:0045881">
    <property type="term" value="P:positive regulation of sporulation resulting in formation of a cellular spore"/>
    <property type="evidence" value="ECO:0007669"/>
    <property type="project" value="TreeGrafter"/>
</dbReference>
<dbReference type="CDD" id="cd16393">
    <property type="entry name" value="SPO0J_N"/>
    <property type="match status" value="1"/>
</dbReference>
<dbReference type="FunFam" id="1.10.10.2830:FF:000001">
    <property type="entry name" value="Chromosome partitioning protein ParB"/>
    <property type="match status" value="1"/>
</dbReference>
<dbReference type="FunFam" id="3.90.1530.30:FF:000001">
    <property type="entry name" value="Chromosome partitioning protein ParB"/>
    <property type="match status" value="1"/>
</dbReference>
<dbReference type="Gene3D" id="1.10.10.2830">
    <property type="match status" value="1"/>
</dbReference>
<dbReference type="Gene3D" id="3.90.1530.30">
    <property type="match status" value="1"/>
</dbReference>
<dbReference type="HAMAP" id="MF_02015">
    <property type="entry name" value="ParB_Noc"/>
    <property type="match status" value="1"/>
</dbReference>
<dbReference type="InterPro" id="IPR050336">
    <property type="entry name" value="Chromosome_partition/occlusion"/>
</dbReference>
<dbReference type="InterPro" id="IPR041468">
    <property type="entry name" value="HTH_ParB/Spo0J"/>
</dbReference>
<dbReference type="InterPro" id="IPR023705">
    <property type="entry name" value="Nucleoid_occlusion_protein"/>
</dbReference>
<dbReference type="InterPro" id="IPR004437">
    <property type="entry name" value="ParB/RepB/Spo0J"/>
</dbReference>
<dbReference type="InterPro" id="IPR003115">
    <property type="entry name" value="ParB/Sulfiredoxin_dom"/>
</dbReference>
<dbReference type="InterPro" id="IPR036086">
    <property type="entry name" value="ParB/Sulfiredoxin_sf"/>
</dbReference>
<dbReference type="NCBIfam" id="TIGR04285">
    <property type="entry name" value="nucleoid_noc"/>
    <property type="match status" value="1"/>
</dbReference>
<dbReference type="NCBIfam" id="TIGR00180">
    <property type="entry name" value="parB_part"/>
    <property type="match status" value="1"/>
</dbReference>
<dbReference type="PANTHER" id="PTHR33375">
    <property type="entry name" value="CHROMOSOME-PARTITIONING PROTEIN PARB-RELATED"/>
    <property type="match status" value="1"/>
</dbReference>
<dbReference type="PANTHER" id="PTHR33375:SF8">
    <property type="entry name" value="NUCLEOID OCCLUSION PROTEIN"/>
    <property type="match status" value="1"/>
</dbReference>
<dbReference type="Pfam" id="PF17762">
    <property type="entry name" value="HTH_ParB"/>
    <property type="match status" value="1"/>
</dbReference>
<dbReference type="Pfam" id="PF02195">
    <property type="entry name" value="ParBc"/>
    <property type="match status" value="1"/>
</dbReference>
<dbReference type="SMART" id="SM00470">
    <property type="entry name" value="ParB"/>
    <property type="match status" value="1"/>
</dbReference>
<dbReference type="SUPFAM" id="SSF109709">
    <property type="entry name" value="KorB DNA-binding domain-like"/>
    <property type="match status" value="1"/>
</dbReference>
<dbReference type="SUPFAM" id="SSF110849">
    <property type="entry name" value="ParB/Sulfiredoxin"/>
    <property type="match status" value="1"/>
</dbReference>
<sequence length="284" mass="32776">MPFSRLFGKKEKNQMDDIVEEGVQRVQELPMDKIFPNQFQPRTVFDQDKIDELARTIRIHGVIQPIVVREMEPDYYEIIAGERRFRAVLSLEMEKIPAIIQNLDDEEVAAIALIENLQREELTPIEEAKAYRSLLDMQDVTQEALAQRVGKSQSAIANKMRLLKLPETVQEAVLNKQISERHARSLLALETEEQQVAILAEIAENHWNVKQTEARIQEILGVKKPVATKKTKPKRQAISRDVRIAMNTIKQSVTMVKDNGMDLDFTEEETDDFYQITIQIPKKK</sequence>
<keyword id="KW-0131">Cell cycle</keyword>
<keyword id="KW-0132">Cell division</keyword>
<keyword id="KW-0963">Cytoplasm</keyword>
<keyword id="KW-0238">DNA-binding</keyword>
<keyword id="KW-0717">Septation</keyword>
<organism>
    <name type="scientific">Listeria monocytogenes serotype 4b (strain CLIP80459)</name>
    <dbReference type="NCBI Taxonomy" id="568819"/>
    <lineage>
        <taxon>Bacteria</taxon>
        <taxon>Bacillati</taxon>
        <taxon>Bacillota</taxon>
        <taxon>Bacilli</taxon>
        <taxon>Bacillales</taxon>
        <taxon>Listeriaceae</taxon>
        <taxon>Listeria</taxon>
    </lineage>
</organism>
<protein>
    <recommendedName>
        <fullName evidence="1">Nucleoid occlusion protein</fullName>
        <shortName evidence="1">Noc</shortName>
    </recommendedName>
</protein>
<comment type="function">
    <text evidence="1">Effects nucleoid occlusion by binding relatively nonspecifically to DNA and preventing the assembly of the division machinery in the vicinity of the nucleoid, especially under conditions that disturb the cell cycle. It helps to coordinate cell division and chromosome segregation by preventing the formation of the Z ring through the nucleoid, which would cause chromosome breakage.</text>
</comment>
<comment type="subcellular location">
    <subcellularLocation>
        <location evidence="1">Cytoplasm</location>
        <location evidence="1">Nucleoid</location>
    </subcellularLocation>
</comment>
<comment type="similarity">
    <text evidence="1">Belongs to the ParB family.</text>
</comment>
<evidence type="ECO:0000255" key="1">
    <source>
        <dbReference type="HAMAP-Rule" id="MF_02015"/>
    </source>
</evidence>
<reference key="1">
    <citation type="journal article" date="2012" name="BMC Genomics">
        <title>Comparative genomics and transcriptomics of lineages I, II, and III strains of Listeria monocytogenes.</title>
        <authorList>
            <person name="Hain T."/>
            <person name="Ghai R."/>
            <person name="Billion A."/>
            <person name="Kuenne C.T."/>
            <person name="Steinweg C."/>
            <person name="Izar B."/>
            <person name="Mohamed W."/>
            <person name="Mraheil M."/>
            <person name="Domann E."/>
            <person name="Schaffrath S."/>
            <person name="Karst U."/>
            <person name="Goesmann A."/>
            <person name="Oehm S."/>
            <person name="Puhler A."/>
            <person name="Merkl R."/>
            <person name="Vorwerk S."/>
            <person name="Glaser P."/>
            <person name="Garrido P."/>
            <person name="Rusniok C."/>
            <person name="Buchrieser C."/>
            <person name="Goebel W."/>
            <person name="Chakraborty T."/>
        </authorList>
    </citation>
    <scope>NUCLEOTIDE SEQUENCE [LARGE SCALE GENOMIC DNA]</scope>
    <source>
        <strain>CLIP80459</strain>
    </source>
</reference>
<feature type="chain" id="PRO_1000216416" description="Nucleoid occlusion protein">
    <location>
        <begin position="1"/>
        <end position="284"/>
    </location>
</feature>
<feature type="DNA-binding region" description="H-T-H motif" evidence="1">
    <location>
        <begin position="143"/>
        <end position="162"/>
    </location>
</feature>
<accession>C1L0C8</accession>
<gene>
    <name evidence="1" type="primary">noc</name>
    <name type="ordered locus">Lm4b_02767</name>
</gene>
<name>NOC_LISMC</name>